<organism>
    <name type="scientific">Shewanella sp. (strain MR-4)</name>
    <dbReference type="NCBI Taxonomy" id="60480"/>
    <lineage>
        <taxon>Bacteria</taxon>
        <taxon>Pseudomonadati</taxon>
        <taxon>Pseudomonadota</taxon>
        <taxon>Gammaproteobacteria</taxon>
        <taxon>Alteromonadales</taxon>
        <taxon>Shewanellaceae</taxon>
        <taxon>Shewanella</taxon>
    </lineage>
</organism>
<name>FABZ_SHESM</name>
<protein>
    <recommendedName>
        <fullName evidence="1">3-hydroxyacyl-[acyl-carrier-protein] dehydratase FabZ</fullName>
        <ecNumber evidence="1">4.2.1.59</ecNumber>
    </recommendedName>
    <alternativeName>
        <fullName evidence="1">(3R)-hydroxymyristoyl-[acyl-carrier-protein] dehydratase</fullName>
        <shortName evidence="1">(3R)-hydroxymyristoyl-ACP dehydrase</shortName>
    </alternativeName>
    <alternativeName>
        <fullName evidence="1">Beta-hydroxyacyl-ACP dehydratase</fullName>
    </alternativeName>
</protein>
<accession>Q0HGW6</accession>
<reference key="1">
    <citation type="submission" date="2006-08" db="EMBL/GenBank/DDBJ databases">
        <title>Complete sequence of Shewanella sp. MR-4.</title>
        <authorList>
            <consortium name="US DOE Joint Genome Institute"/>
            <person name="Copeland A."/>
            <person name="Lucas S."/>
            <person name="Lapidus A."/>
            <person name="Barry K."/>
            <person name="Detter J.C."/>
            <person name="Glavina del Rio T."/>
            <person name="Hammon N."/>
            <person name="Israni S."/>
            <person name="Dalin E."/>
            <person name="Tice H."/>
            <person name="Pitluck S."/>
            <person name="Kiss H."/>
            <person name="Brettin T."/>
            <person name="Bruce D."/>
            <person name="Han C."/>
            <person name="Tapia R."/>
            <person name="Gilna P."/>
            <person name="Schmutz J."/>
            <person name="Larimer F."/>
            <person name="Land M."/>
            <person name="Hauser L."/>
            <person name="Kyrpides N."/>
            <person name="Mikhailova N."/>
            <person name="Nealson K."/>
            <person name="Konstantinidis K."/>
            <person name="Klappenbach J."/>
            <person name="Tiedje J."/>
            <person name="Richardson P."/>
        </authorList>
    </citation>
    <scope>NUCLEOTIDE SEQUENCE [LARGE SCALE GENOMIC DNA]</scope>
    <source>
        <strain>MR-4</strain>
    </source>
</reference>
<proteinExistence type="inferred from homology"/>
<feature type="chain" id="PRO_0000301927" description="3-hydroxyacyl-[acyl-carrier-protein] dehydratase FabZ">
    <location>
        <begin position="1"/>
        <end position="154"/>
    </location>
</feature>
<feature type="active site" evidence="1">
    <location>
        <position position="54"/>
    </location>
</feature>
<sequence length="154" mass="17433">MSNQMNTMDITEILKYLPHRYPFLLIDRVLDYTPGESLHAIKNVTINEPFFQGHFPVQPVMPGVLILEAMAQATGLLAFKTMSDDVPPPGVLYYFAGIDNARFRRVVEPGDQIHFDVKMIKERRGIGVFYGEAKVDGEVVCSAEIMCARREINQ</sequence>
<comment type="function">
    <text evidence="1">Involved in unsaturated fatty acids biosynthesis. Catalyzes the dehydration of short chain beta-hydroxyacyl-ACPs and long chain saturated and unsaturated beta-hydroxyacyl-ACPs.</text>
</comment>
<comment type="catalytic activity">
    <reaction evidence="1">
        <text>a (3R)-hydroxyacyl-[ACP] = a (2E)-enoyl-[ACP] + H2O</text>
        <dbReference type="Rhea" id="RHEA:13097"/>
        <dbReference type="Rhea" id="RHEA-COMP:9925"/>
        <dbReference type="Rhea" id="RHEA-COMP:9945"/>
        <dbReference type="ChEBI" id="CHEBI:15377"/>
        <dbReference type="ChEBI" id="CHEBI:78784"/>
        <dbReference type="ChEBI" id="CHEBI:78827"/>
        <dbReference type="EC" id="4.2.1.59"/>
    </reaction>
</comment>
<comment type="subcellular location">
    <subcellularLocation>
        <location evidence="1">Cytoplasm</location>
    </subcellularLocation>
</comment>
<comment type="similarity">
    <text evidence="1">Belongs to the thioester dehydratase family. FabZ subfamily.</text>
</comment>
<dbReference type="EC" id="4.2.1.59" evidence="1"/>
<dbReference type="EMBL" id="CP000446">
    <property type="protein sequence ID" value="ABI39701.1"/>
    <property type="molecule type" value="Genomic_DNA"/>
</dbReference>
<dbReference type="RefSeq" id="WP_011623382.1">
    <property type="nucleotide sequence ID" value="NC_008321.1"/>
</dbReference>
<dbReference type="SMR" id="Q0HGW6"/>
<dbReference type="KEGG" id="she:Shewmr4_2630"/>
<dbReference type="HOGENOM" id="CLU_078912_1_0_6"/>
<dbReference type="GO" id="GO:0005737">
    <property type="term" value="C:cytoplasm"/>
    <property type="evidence" value="ECO:0007669"/>
    <property type="project" value="UniProtKB-SubCell"/>
</dbReference>
<dbReference type="GO" id="GO:0016020">
    <property type="term" value="C:membrane"/>
    <property type="evidence" value="ECO:0007669"/>
    <property type="project" value="GOC"/>
</dbReference>
<dbReference type="GO" id="GO:0019171">
    <property type="term" value="F:(3R)-hydroxyacyl-[acyl-carrier-protein] dehydratase activity"/>
    <property type="evidence" value="ECO:0007669"/>
    <property type="project" value="UniProtKB-EC"/>
</dbReference>
<dbReference type="GO" id="GO:0006633">
    <property type="term" value="P:fatty acid biosynthetic process"/>
    <property type="evidence" value="ECO:0007669"/>
    <property type="project" value="UniProtKB-UniRule"/>
</dbReference>
<dbReference type="GO" id="GO:0009245">
    <property type="term" value="P:lipid A biosynthetic process"/>
    <property type="evidence" value="ECO:0007669"/>
    <property type="project" value="UniProtKB-UniRule"/>
</dbReference>
<dbReference type="CDD" id="cd01288">
    <property type="entry name" value="FabZ"/>
    <property type="match status" value="1"/>
</dbReference>
<dbReference type="FunFam" id="3.10.129.10:FF:000001">
    <property type="entry name" value="3-hydroxyacyl-[acyl-carrier-protein] dehydratase FabZ"/>
    <property type="match status" value="1"/>
</dbReference>
<dbReference type="Gene3D" id="3.10.129.10">
    <property type="entry name" value="Hotdog Thioesterase"/>
    <property type="match status" value="1"/>
</dbReference>
<dbReference type="HAMAP" id="MF_00406">
    <property type="entry name" value="FabZ"/>
    <property type="match status" value="1"/>
</dbReference>
<dbReference type="InterPro" id="IPR013114">
    <property type="entry name" value="FabA_FabZ"/>
</dbReference>
<dbReference type="InterPro" id="IPR010084">
    <property type="entry name" value="FabZ"/>
</dbReference>
<dbReference type="InterPro" id="IPR029069">
    <property type="entry name" value="HotDog_dom_sf"/>
</dbReference>
<dbReference type="NCBIfam" id="TIGR01750">
    <property type="entry name" value="fabZ"/>
    <property type="match status" value="1"/>
</dbReference>
<dbReference type="NCBIfam" id="NF000582">
    <property type="entry name" value="PRK00006.1"/>
    <property type="match status" value="1"/>
</dbReference>
<dbReference type="PANTHER" id="PTHR30272">
    <property type="entry name" value="3-HYDROXYACYL-[ACYL-CARRIER-PROTEIN] DEHYDRATASE"/>
    <property type="match status" value="1"/>
</dbReference>
<dbReference type="PANTHER" id="PTHR30272:SF1">
    <property type="entry name" value="3-HYDROXYACYL-[ACYL-CARRIER-PROTEIN] DEHYDRATASE"/>
    <property type="match status" value="1"/>
</dbReference>
<dbReference type="Pfam" id="PF07977">
    <property type="entry name" value="FabA"/>
    <property type="match status" value="1"/>
</dbReference>
<dbReference type="SUPFAM" id="SSF54637">
    <property type="entry name" value="Thioesterase/thiol ester dehydrase-isomerase"/>
    <property type="match status" value="1"/>
</dbReference>
<evidence type="ECO:0000255" key="1">
    <source>
        <dbReference type="HAMAP-Rule" id="MF_00406"/>
    </source>
</evidence>
<gene>
    <name evidence="1" type="primary">fabZ</name>
    <name type="ordered locus">Shewmr4_2630</name>
</gene>
<keyword id="KW-0963">Cytoplasm</keyword>
<keyword id="KW-0441">Lipid A biosynthesis</keyword>
<keyword id="KW-0444">Lipid biosynthesis</keyword>
<keyword id="KW-0443">Lipid metabolism</keyword>
<keyword id="KW-0456">Lyase</keyword>